<protein>
    <recommendedName>
        <fullName evidence="1">3-hydroxyacyl-[acyl-carrier-protein] dehydratase FabZ</fullName>
        <ecNumber evidence="1">4.2.1.59</ecNumber>
    </recommendedName>
    <alternativeName>
        <fullName evidence="1">(3R)-hydroxymyristoyl-[acyl-carrier-protein] dehydratase</fullName>
        <shortName evidence="1">(3R)-hydroxymyristoyl-ACP dehydrase</shortName>
    </alternativeName>
    <alternativeName>
        <fullName evidence="1">Beta-hydroxyacyl-ACP dehydratase</fullName>
    </alternativeName>
</protein>
<dbReference type="EC" id="4.2.1.59" evidence="1"/>
<dbReference type="EMBL" id="CP000513">
    <property type="protein sequence ID" value="ABQ13518.1"/>
    <property type="status" value="ALT_INIT"/>
    <property type="molecule type" value="Genomic_DNA"/>
</dbReference>
<dbReference type="SMR" id="A5EV60"/>
<dbReference type="STRING" id="246195.DNO_0684"/>
<dbReference type="KEGG" id="dno:DNO_0684"/>
<dbReference type="eggNOG" id="COG0764">
    <property type="taxonomic scope" value="Bacteria"/>
</dbReference>
<dbReference type="HOGENOM" id="CLU_078912_1_0_6"/>
<dbReference type="Proteomes" id="UP000000248">
    <property type="component" value="Chromosome"/>
</dbReference>
<dbReference type="GO" id="GO:0005737">
    <property type="term" value="C:cytoplasm"/>
    <property type="evidence" value="ECO:0007669"/>
    <property type="project" value="UniProtKB-SubCell"/>
</dbReference>
<dbReference type="GO" id="GO:0016020">
    <property type="term" value="C:membrane"/>
    <property type="evidence" value="ECO:0007669"/>
    <property type="project" value="GOC"/>
</dbReference>
<dbReference type="GO" id="GO:0019171">
    <property type="term" value="F:(3R)-hydroxyacyl-[acyl-carrier-protein] dehydratase activity"/>
    <property type="evidence" value="ECO:0007669"/>
    <property type="project" value="UniProtKB-EC"/>
</dbReference>
<dbReference type="GO" id="GO:0006633">
    <property type="term" value="P:fatty acid biosynthetic process"/>
    <property type="evidence" value="ECO:0007669"/>
    <property type="project" value="UniProtKB-UniRule"/>
</dbReference>
<dbReference type="GO" id="GO:0009245">
    <property type="term" value="P:lipid A biosynthetic process"/>
    <property type="evidence" value="ECO:0007669"/>
    <property type="project" value="UniProtKB-UniRule"/>
</dbReference>
<dbReference type="CDD" id="cd01288">
    <property type="entry name" value="FabZ"/>
    <property type="match status" value="1"/>
</dbReference>
<dbReference type="FunFam" id="3.10.129.10:FF:000001">
    <property type="entry name" value="3-hydroxyacyl-[acyl-carrier-protein] dehydratase FabZ"/>
    <property type="match status" value="1"/>
</dbReference>
<dbReference type="Gene3D" id="3.10.129.10">
    <property type="entry name" value="Hotdog Thioesterase"/>
    <property type="match status" value="1"/>
</dbReference>
<dbReference type="HAMAP" id="MF_00406">
    <property type="entry name" value="FabZ"/>
    <property type="match status" value="1"/>
</dbReference>
<dbReference type="InterPro" id="IPR013114">
    <property type="entry name" value="FabA_FabZ"/>
</dbReference>
<dbReference type="InterPro" id="IPR010084">
    <property type="entry name" value="FabZ"/>
</dbReference>
<dbReference type="InterPro" id="IPR029069">
    <property type="entry name" value="HotDog_dom_sf"/>
</dbReference>
<dbReference type="NCBIfam" id="TIGR01750">
    <property type="entry name" value="fabZ"/>
    <property type="match status" value="1"/>
</dbReference>
<dbReference type="NCBIfam" id="NF000582">
    <property type="entry name" value="PRK00006.1"/>
    <property type="match status" value="1"/>
</dbReference>
<dbReference type="PANTHER" id="PTHR30272">
    <property type="entry name" value="3-HYDROXYACYL-[ACYL-CARRIER-PROTEIN] DEHYDRATASE"/>
    <property type="match status" value="1"/>
</dbReference>
<dbReference type="PANTHER" id="PTHR30272:SF1">
    <property type="entry name" value="3-HYDROXYACYL-[ACYL-CARRIER-PROTEIN] DEHYDRATASE"/>
    <property type="match status" value="1"/>
</dbReference>
<dbReference type="Pfam" id="PF07977">
    <property type="entry name" value="FabA"/>
    <property type="match status" value="1"/>
</dbReference>
<dbReference type="SUPFAM" id="SSF54637">
    <property type="entry name" value="Thioesterase/thiol ester dehydrase-isomerase"/>
    <property type="match status" value="1"/>
</dbReference>
<comment type="function">
    <text evidence="1">Involved in unsaturated fatty acids biosynthesis. Catalyzes the dehydration of short chain beta-hydroxyacyl-ACPs and long chain saturated and unsaturated beta-hydroxyacyl-ACPs.</text>
</comment>
<comment type="catalytic activity">
    <reaction evidence="1">
        <text>a (3R)-hydroxyacyl-[ACP] = a (2E)-enoyl-[ACP] + H2O</text>
        <dbReference type="Rhea" id="RHEA:13097"/>
        <dbReference type="Rhea" id="RHEA-COMP:9925"/>
        <dbReference type="Rhea" id="RHEA-COMP:9945"/>
        <dbReference type="ChEBI" id="CHEBI:15377"/>
        <dbReference type="ChEBI" id="CHEBI:78784"/>
        <dbReference type="ChEBI" id="CHEBI:78827"/>
        <dbReference type="EC" id="4.2.1.59"/>
    </reaction>
</comment>
<comment type="subcellular location">
    <subcellularLocation>
        <location evidence="1">Cytoplasm</location>
    </subcellularLocation>
</comment>
<comment type="similarity">
    <text evidence="1">Belongs to the thioester dehydratase family. FabZ subfamily.</text>
</comment>
<comment type="sequence caution" evidence="2">
    <conflict type="erroneous initiation">
        <sequence resource="EMBL-CDS" id="ABQ13518"/>
    </conflict>
</comment>
<reference key="1">
    <citation type="journal article" date="2007" name="Nat. Biotechnol.">
        <title>Genome sequence and identification of candidate vaccine antigens from the animal pathogen Dichelobacter nodosus.</title>
        <authorList>
            <person name="Myers G.S.A."/>
            <person name="Parker D."/>
            <person name="Al-Hasani K."/>
            <person name="Kennan R.M."/>
            <person name="Seemann T."/>
            <person name="Ren Q."/>
            <person name="Badger J.H."/>
            <person name="Selengut J.D."/>
            <person name="Deboy R.T."/>
            <person name="Tettelin H."/>
            <person name="Boyce J.D."/>
            <person name="McCarl V.P."/>
            <person name="Han X."/>
            <person name="Nelson W.C."/>
            <person name="Madupu R."/>
            <person name="Mohamoud Y."/>
            <person name="Holley T."/>
            <person name="Fedorova N."/>
            <person name="Khouri H."/>
            <person name="Bottomley S.P."/>
            <person name="Whittington R.J."/>
            <person name="Adler B."/>
            <person name="Songer J.G."/>
            <person name="Rood J.I."/>
            <person name="Paulsen I.T."/>
        </authorList>
    </citation>
    <scope>NUCLEOTIDE SEQUENCE [LARGE SCALE GENOMIC DNA]</scope>
    <source>
        <strain>VCS1703A</strain>
    </source>
</reference>
<sequence>MGIEEIRRYLPHRYPFLLIDRIIALETQNYIHALKNVTANEPFFQGHFPNKAVMPGVLVVEAMAQAAGILGVKSAKAAAGLPDEPEEDGIYFFVGIDKARFRKTVVPGDQLILEVKLLRSRRGIWSFDARATVDDAVVCTAEIMCTSAGKGAA</sequence>
<accession>A5EV60</accession>
<gene>
    <name evidence="1" type="primary">fabZ</name>
    <name type="ordered locus">DNO_0684</name>
</gene>
<feature type="chain" id="PRO_0000340774" description="3-hydroxyacyl-[acyl-carrier-protein] dehydratase FabZ">
    <location>
        <begin position="1"/>
        <end position="153"/>
    </location>
</feature>
<feature type="active site" evidence="1">
    <location>
        <position position="47"/>
    </location>
</feature>
<name>FABZ_DICNV</name>
<evidence type="ECO:0000255" key="1">
    <source>
        <dbReference type="HAMAP-Rule" id="MF_00406"/>
    </source>
</evidence>
<evidence type="ECO:0000305" key="2"/>
<keyword id="KW-0963">Cytoplasm</keyword>
<keyword id="KW-0441">Lipid A biosynthesis</keyword>
<keyword id="KW-0444">Lipid biosynthesis</keyword>
<keyword id="KW-0443">Lipid metabolism</keyword>
<keyword id="KW-0456">Lyase</keyword>
<keyword id="KW-1185">Reference proteome</keyword>
<organism>
    <name type="scientific">Dichelobacter nodosus (strain VCS1703A)</name>
    <dbReference type="NCBI Taxonomy" id="246195"/>
    <lineage>
        <taxon>Bacteria</taxon>
        <taxon>Pseudomonadati</taxon>
        <taxon>Pseudomonadota</taxon>
        <taxon>Gammaproteobacteria</taxon>
        <taxon>Cardiobacteriales</taxon>
        <taxon>Cardiobacteriaceae</taxon>
        <taxon>Dichelobacter</taxon>
    </lineage>
</organism>
<proteinExistence type="inferred from homology"/>